<gene>
    <name evidence="1" type="primary">darP</name>
    <name type="ordered locus">BP2965</name>
</gene>
<dbReference type="EMBL" id="BX640420">
    <property type="protein sequence ID" value="CAE43237.1"/>
    <property type="status" value="ALT_INIT"/>
    <property type="molecule type" value="Genomic_DNA"/>
</dbReference>
<dbReference type="RefSeq" id="NP_881544.1">
    <property type="nucleotide sequence ID" value="NC_002929.2"/>
</dbReference>
<dbReference type="SMR" id="Q7VUV5"/>
<dbReference type="STRING" id="257313.BP2965"/>
<dbReference type="PaxDb" id="257313-BP2965"/>
<dbReference type="KEGG" id="bpe:BP2965"/>
<dbReference type="PATRIC" id="fig|257313.5.peg.3208"/>
<dbReference type="eggNOG" id="COG3028">
    <property type="taxonomic scope" value="Bacteria"/>
</dbReference>
<dbReference type="HOGENOM" id="CLU_106757_1_0_4"/>
<dbReference type="Proteomes" id="UP000002676">
    <property type="component" value="Chromosome"/>
</dbReference>
<dbReference type="GO" id="GO:0005829">
    <property type="term" value="C:cytosol"/>
    <property type="evidence" value="ECO:0007669"/>
    <property type="project" value="TreeGrafter"/>
</dbReference>
<dbReference type="GO" id="GO:0043022">
    <property type="term" value="F:ribosome binding"/>
    <property type="evidence" value="ECO:0007669"/>
    <property type="project" value="UniProtKB-UniRule"/>
</dbReference>
<dbReference type="GO" id="GO:0019843">
    <property type="term" value="F:rRNA binding"/>
    <property type="evidence" value="ECO:0007669"/>
    <property type="project" value="UniProtKB-UniRule"/>
</dbReference>
<dbReference type="GO" id="GO:1902626">
    <property type="term" value="P:assembly of large subunit precursor of preribosome"/>
    <property type="evidence" value="ECO:0007669"/>
    <property type="project" value="UniProtKB-UniRule"/>
</dbReference>
<dbReference type="CDD" id="cd16331">
    <property type="entry name" value="YjgA-like"/>
    <property type="match status" value="1"/>
</dbReference>
<dbReference type="Gene3D" id="1.10.60.30">
    <property type="entry name" value="PSPTO4464-like domains"/>
    <property type="match status" value="2"/>
</dbReference>
<dbReference type="HAMAP" id="MF_00765">
    <property type="entry name" value="DarP"/>
    <property type="match status" value="1"/>
</dbReference>
<dbReference type="InterPro" id="IPR006839">
    <property type="entry name" value="DarP"/>
</dbReference>
<dbReference type="InterPro" id="IPR023153">
    <property type="entry name" value="DarP_sf"/>
</dbReference>
<dbReference type="NCBIfam" id="NF003593">
    <property type="entry name" value="PRK05255.1-1"/>
    <property type="match status" value="1"/>
</dbReference>
<dbReference type="PANTHER" id="PTHR38101">
    <property type="entry name" value="UPF0307 PROTEIN YJGA"/>
    <property type="match status" value="1"/>
</dbReference>
<dbReference type="PANTHER" id="PTHR38101:SF1">
    <property type="entry name" value="UPF0307 PROTEIN YJGA"/>
    <property type="match status" value="1"/>
</dbReference>
<dbReference type="Pfam" id="PF04751">
    <property type="entry name" value="DarP"/>
    <property type="match status" value="1"/>
</dbReference>
<dbReference type="PIRSF" id="PIRSF016183">
    <property type="entry name" value="UCP016183"/>
    <property type="match status" value="1"/>
</dbReference>
<dbReference type="SUPFAM" id="SSF158710">
    <property type="entry name" value="PSPTO4464-like"/>
    <property type="match status" value="1"/>
</dbReference>
<proteinExistence type="inferred from homology"/>
<reference key="1">
    <citation type="journal article" date="2003" name="Nat. Genet.">
        <title>Comparative analysis of the genome sequences of Bordetella pertussis, Bordetella parapertussis and Bordetella bronchiseptica.</title>
        <authorList>
            <person name="Parkhill J."/>
            <person name="Sebaihia M."/>
            <person name="Preston A."/>
            <person name="Murphy L.D."/>
            <person name="Thomson N.R."/>
            <person name="Harris D.E."/>
            <person name="Holden M.T.G."/>
            <person name="Churcher C.M."/>
            <person name="Bentley S.D."/>
            <person name="Mungall K.L."/>
            <person name="Cerdeno-Tarraga A.-M."/>
            <person name="Temple L."/>
            <person name="James K.D."/>
            <person name="Harris B."/>
            <person name="Quail M.A."/>
            <person name="Achtman M."/>
            <person name="Atkin R."/>
            <person name="Baker S."/>
            <person name="Basham D."/>
            <person name="Bason N."/>
            <person name="Cherevach I."/>
            <person name="Chillingworth T."/>
            <person name="Collins M."/>
            <person name="Cronin A."/>
            <person name="Davis P."/>
            <person name="Doggett J."/>
            <person name="Feltwell T."/>
            <person name="Goble A."/>
            <person name="Hamlin N."/>
            <person name="Hauser H."/>
            <person name="Holroyd S."/>
            <person name="Jagels K."/>
            <person name="Leather S."/>
            <person name="Moule S."/>
            <person name="Norberczak H."/>
            <person name="O'Neil S."/>
            <person name="Ormond D."/>
            <person name="Price C."/>
            <person name="Rabbinowitsch E."/>
            <person name="Rutter S."/>
            <person name="Sanders M."/>
            <person name="Saunders D."/>
            <person name="Seeger K."/>
            <person name="Sharp S."/>
            <person name="Simmonds M."/>
            <person name="Skelton J."/>
            <person name="Squares R."/>
            <person name="Squares S."/>
            <person name="Stevens K."/>
            <person name="Unwin L."/>
            <person name="Whitehead S."/>
            <person name="Barrell B.G."/>
            <person name="Maskell D.J."/>
        </authorList>
    </citation>
    <scope>NUCLEOTIDE SEQUENCE [LARGE SCALE GENOMIC DNA]</scope>
    <source>
        <strain>Tohama I / ATCC BAA-589 / NCTC 13251</strain>
    </source>
</reference>
<evidence type="ECO:0000255" key="1">
    <source>
        <dbReference type="HAMAP-Rule" id="MF_00765"/>
    </source>
</evidence>
<evidence type="ECO:0000256" key="2">
    <source>
        <dbReference type="SAM" id="MobiDB-lite"/>
    </source>
</evidence>
<evidence type="ECO:0000305" key="3"/>
<accession>Q7VUV5</accession>
<feature type="chain" id="PRO_0000208211" description="Dual-action ribosomal maturation protein DarP">
    <location>
        <begin position="1"/>
        <end position="183"/>
    </location>
</feature>
<feature type="region of interest" description="Disordered" evidence="2">
    <location>
        <begin position="1"/>
        <end position="27"/>
    </location>
</feature>
<feature type="compositionally biased region" description="Acidic residues" evidence="2">
    <location>
        <begin position="9"/>
        <end position="18"/>
    </location>
</feature>
<comment type="function">
    <text evidence="1">Member of a network of 50S ribosomal subunit biogenesis factors which assembles along the 30S-50S interface, preventing incorrect 23S rRNA structures from forming. Promotes peptidyl transferase center (PTC) maturation.</text>
</comment>
<comment type="subcellular location">
    <subcellularLocation>
        <location evidence="1">Cytoplasm</location>
    </subcellularLocation>
    <text evidence="1">Associates with late stage pre-50S ribosomal subunits.</text>
</comment>
<comment type="similarity">
    <text evidence="1">Belongs to the DarP family.</text>
</comment>
<comment type="sequence caution" evidence="3">
    <conflict type="erroneous initiation">
        <sequence resource="EMBL-CDS" id="CAE43237"/>
    </conflict>
    <text>Extended N-terminus.</text>
</comment>
<protein>
    <recommendedName>
        <fullName evidence="1">Dual-action ribosomal maturation protein DarP</fullName>
    </recommendedName>
    <alternativeName>
        <fullName evidence="1">Large ribosomal subunit assembly factor DarP</fullName>
    </alternativeName>
</protein>
<keyword id="KW-0963">Cytoplasm</keyword>
<keyword id="KW-1185">Reference proteome</keyword>
<keyword id="KW-0690">Ribosome biogenesis</keyword>
<keyword id="KW-0694">RNA-binding</keyword>
<keyword id="KW-0699">rRNA-binding</keyword>
<organism>
    <name type="scientific">Bordetella pertussis (strain Tohama I / ATCC BAA-589 / NCTC 13251)</name>
    <dbReference type="NCBI Taxonomy" id="257313"/>
    <lineage>
        <taxon>Bacteria</taxon>
        <taxon>Pseudomonadati</taxon>
        <taxon>Pseudomonadota</taxon>
        <taxon>Betaproteobacteria</taxon>
        <taxon>Burkholderiales</taxon>
        <taxon>Alcaligenaceae</taxon>
        <taxon>Bordetella</taxon>
    </lineage>
</organism>
<sequence length="183" mass="21002">MSSHSQEPVGEENFDDSEYDRPNKSQVKREMHALLDLGKELVELSPERLRQLPLEERLYEAIREAQRTTGREGRRRQIHFVGKLMRSAPAEAIRAQLDTWRNGSREETAAMHRLEALRERLLTDDDALTAVLQRNPDADIQHLRALIRAARKEAAANAALSQGQEPQRKQYRALFQALKNLSA</sequence>
<name>DARP_BORPE</name>